<evidence type="ECO:0000250" key="1"/>
<evidence type="ECO:0000305" key="2"/>
<accession>Q8TYC7</accession>
<dbReference type="EMBL" id="AE009439">
    <property type="protein sequence ID" value="AAM01590.1"/>
    <property type="molecule type" value="Genomic_DNA"/>
</dbReference>
<dbReference type="RefSeq" id="WP_011018745.1">
    <property type="nucleotide sequence ID" value="NC_003551.1"/>
</dbReference>
<dbReference type="SMR" id="Q8TYC7"/>
<dbReference type="STRING" id="190192.MK0375"/>
<dbReference type="PaxDb" id="190192-MK0375"/>
<dbReference type="EnsemblBacteria" id="AAM01590">
    <property type="protein sequence ID" value="AAM01590"/>
    <property type="gene ID" value="MK0375"/>
</dbReference>
<dbReference type="GeneID" id="1477678"/>
<dbReference type="KEGG" id="mka:MK0375"/>
<dbReference type="HOGENOM" id="CLU_131909_0_1_2"/>
<dbReference type="InParanoid" id="Q8TYC7"/>
<dbReference type="OrthoDB" id="86066at2157"/>
<dbReference type="Proteomes" id="UP000001826">
    <property type="component" value="Chromosome"/>
</dbReference>
<dbReference type="GO" id="GO:0005737">
    <property type="term" value="C:cytoplasm"/>
    <property type="evidence" value="ECO:0007669"/>
    <property type="project" value="UniProtKB-SubCell"/>
</dbReference>
<dbReference type="GO" id="GO:0016272">
    <property type="term" value="C:prefoldin complex"/>
    <property type="evidence" value="ECO:0007669"/>
    <property type="project" value="UniProtKB-UniRule"/>
</dbReference>
<dbReference type="GO" id="GO:0051087">
    <property type="term" value="F:protein-folding chaperone binding"/>
    <property type="evidence" value="ECO:0007669"/>
    <property type="project" value="TreeGrafter"/>
</dbReference>
<dbReference type="GO" id="GO:0051082">
    <property type="term" value="F:unfolded protein binding"/>
    <property type="evidence" value="ECO:0007669"/>
    <property type="project" value="UniProtKB-UniRule"/>
</dbReference>
<dbReference type="GO" id="GO:0051131">
    <property type="term" value="P:chaperone-mediated protein complex assembly"/>
    <property type="evidence" value="ECO:0007669"/>
    <property type="project" value="TreeGrafter"/>
</dbReference>
<dbReference type="GO" id="GO:0006457">
    <property type="term" value="P:protein folding"/>
    <property type="evidence" value="ECO:0007669"/>
    <property type="project" value="UniProtKB-UniRule"/>
</dbReference>
<dbReference type="CDD" id="cd23162">
    <property type="entry name" value="Prefoldin_beta_GimC"/>
    <property type="match status" value="1"/>
</dbReference>
<dbReference type="Gene3D" id="1.10.287.370">
    <property type="match status" value="1"/>
</dbReference>
<dbReference type="HAMAP" id="MF_00307">
    <property type="entry name" value="PfdB"/>
    <property type="match status" value="1"/>
</dbReference>
<dbReference type="InterPro" id="IPR002777">
    <property type="entry name" value="PFD_beta-like"/>
</dbReference>
<dbReference type="InterPro" id="IPR012713">
    <property type="entry name" value="PfdB"/>
</dbReference>
<dbReference type="InterPro" id="IPR009053">
    <property type="entry name" value="Prefoldin"/>
</dbReference>
<dbReference type="NCBIfam" id="TIGR02338">
    <property type="entry name" value="gimC_beta"/>
    <property type="match status" value="1"/>
</dbReference>
<dbReference type="PANTHER" id="PTHR21431">
    <property type="entry name" value="PREFOLDIN SUBUNIT 6"/>
    <property type="match status" value="1"/>
</dbReference>
<dbReference type="PANTHER" id="PTHR21431:SF0">
    <property type="entry name" value="PREFOLDIN SUBUNIT 6"/>
    <property type="match status" value="1"/>
</dbReference>
<dbReference type="Pfam" id="PF01920">
    <property type="entry name" value="Prefoldin_2"/>
    <property type="match status" value="1"/>
</dbReference>
<dbReference type="SUPFAM" id="SSF46579">
    <property type="entry name" value="Prefoldin"/>
    <property type="match status" value="1"/>
</dbReference>
<keyword id="KW-0143">Chaperone</keyword>
<keyword id="KW-0963">Cytoplasm</keyword>
<keyword id="KW-1185">Reference proteome</keyword>
<sequence>MAQNVEQQVAQLQQLQQQLSSIVAQKQQLELQLREIERALKELDEIEEDTKVYKTVGGLLIEADRDEVKEELEDRKETLELRVKTLEKQEKRLQQQIENLQKRLQKALQQAEGGGGAGAA</sequence>
<organism>
    <name type="scientific">Methanopyrus kandleri (strain AV19 / DSM 6324 / JCM 9639 / NBRC 100938)</name>
    <dbReference type="NCBI Taxonomy" id="190192"/>
    <lineage>
        <taxon>Archaea</taxon>
        <taxon>Methanobacteriati</taxon>
        <taxon>Methanobacteriota</taxon>
        <taxon>Methanomada group</taxon>
        <taxon>Methanopyri</taxon>
        <taxon>Methanopyrales</taxon>
        <taxon>Methanopyraceae</taxon>
        <taxon>Methanopyrus</taxon>
    </lineage>
</organism>
<protein>
    <recommendedName>
        <fullName>Prefoldin subunit beta</fullName>
    </recommendedName>
    <alternativeName>
        <fullName>GimC subunit beta</fullName>
    </alternativeName>
</protein>
<comment type="function">
    <text evidence="1">Molecular chaperone capable of stabilizing a range of proteins. Seems to fulfill an ATP-independent, HSP70-like function in archaeal de novo protein folding (By similarity).</text>
</comment>
<comment type="subunit">
    <text evidence="1">Heterohexamer of two alpha and four beta subunits.</text>
</comment>
<comment type="subcellular location">
    <subcellularLocation>
        <location evidence="1">Cytoplasm</location>
    </subcellularLocation>
</comment>
<comment type="similarity">
    <text evidence="2">Belongs to the prefoldin subunit beta family.</text>
</comment>
<gene>
    <name type="primary">pfdB</name>
    <name type="ordered locus">MK0375</name>
</gene>
<feature type="chain" id="PRO_0000124861" description="Prefoldin subunit beta">
    <location>
        <begin position="1"/>
        <end position="120"/>
    </location>
</feature>
<name>PFDB_METKA</name>
<reference key="1">
    <citation type="journal article" date="2002" name="Proc. Natl. Acad. Sci. U.S.A.">
        <title>The complete genome of hyperthermophile Methanopyrus kandleri AV19 and monophyly of archaeal methanogens.</title>
        <authorList>
            <person name="Slesarev A.I."/>
            <person name="Mezhevaya K.V."/>
            <person name="Makarova K.S."/>
            <person name="Polushin N.N."/>
            <person name="Shcherbinina O.V."/>
            <person name="Shakhova V.V."/>
            <person name="Belova G.I."/>
            <person name="Aravind L."/>
            <person name="Natale D.A."/>
            <person name="Rogozin I.B."/>
            <person name="Tatusov R.L."/>
            <person name="Wolf Y.I."/>
            <person name="Stetter K.O."/>
            <person name="Malykh A.G."/>
            <person name="Koonin E.V."/>
            <person name="Kozyavkin S.A."/>
        </authorList>
    </citation>
    <scope>NUCLEOTIDE SEQUENCE [LARGE SCALE GENOMIC DNA]</scope>
    <source>
        <strain>AV19 / DSM 6324 / JCM 9639 / NBRC 100938</strain>
    </source>
</reference>
<proteinExistence type="inferred from homology"/>